<dbReference type="EC" id="3.6.1.-" evidence="1"/>
<dbReference type="EMBL" id="CP000469">
    <property type="protein sequence ID" value="ABK49268.1"/>
    <property type="molecule type" value="Genomic_DNA"/>
</dbReference>
<dbReference type="RefSeq" id="WP_011717888.1">
    <property type="nucleotide sequence ID" value="NC_008577.1"/>
</dbReference>
<dbReference type="SMR" id="A0KZP9"/>
<dbReference type="STRING" id="94122.Shewana3_3043"/>
<dbReference type="GeneID" id="94728965"/>
<dbReference type="KEGG" id="shn:Shewana3_3043"/>
<dbReference type="eggNOG" id="COG0494">
    <property type="taxonomic scope" value="Bacteria"/>
</dbReference>
<dbReference type="HOGENOM" id="CLU_087195_3_1_6"/>
<dbReference type="OrthoDB" id="9816040at2"/>
<dbReference type="Proteomes" id="UP000002589">
    <property type="component" value="Chromosome"/>
</dbReference>
<dbReference type="GO" id="GO:0005737">
    <property type="term" value="C:cytoplasm"/>
    <property type="evidence" value="ECO:0007669"/>
    <property type="project" value="TreeGrafter"/>
</dbReference>
<dbReference type="GO" id="GO:0034353">
    <property type="term" value="F:mRNA 5'-diphosphatase activity"/>
    <property type="evidence" value="ECO:0007669"/>
    <property type="project" value="TreeGrafter"/>
</dbReference>
<dbReference type="GO" id="GO:0006402">
    <property type="term" value="P:mRNA catabolic process"/>
    <property type="evidence" value="ECO:0007669"/>
    <property type="project" value="TreeGrafter"/>
</dbReference>
<dbReference type="CDD" id="cd03671">
    <property type="entry name" value="NUDIX_Ap4A_hydrolase_plant_like"/>
    <property type="match status" value="1"/>
</dbReference>
<dbReference type="FunFam" id="3.90.79.10:FF:000001">
    <property type="entry name" value="RNA pyrophosphohydrolase"/>
    <property type="match status" value="1"/>
</dbReference>
<dbReference type="Gene3D" id="3.90.79.10">
    <property type="entry name" value="Nucleoside Triphosphate Pyrophosphohydrolase"/>
    <property type="match status" value="1"/>
</dbReference>
<dbReference type="HAMAP" id="MF_00298">
    <property type="entry name" value="Nudix_RppH"/>
    <property type="match status" value="1"/>
</dbReference>
<dbReference type="InterPro" id="IPR020476">
    <property type="entry name" value="Nudix_hydrolase"/>
</dbReference>
<dbReference type="InterPro" id="IPR015797">
    <property type="entry name" value="NUDIX_hydrolase-like_dom_sf"/>
</dbReference>
<dbReference type="InterPro" id="IPR020084">
    <property type="entry name" value="NUDIX_hydrolase_CS"/>
</dbReference>
<dbReference type="InterPro" id="IPR000086">
    <property type="entry name" value="NUDIX_hydrolase_dom"/>
</dbReference>
<dbReference type="InterPro" id="IPR022927">
    <property type="entry name" value="RppH"/>
</dbReference>
<dbReference type="NCBIfam" id="NF001934">
    <property type="entry name" value="PRK00714.1-1"/>
    <property type="match status" value="1"/>
</dbReference>
<dbReference type="NCBIfam" id="NF001937">
    <property type="entry name" value="PRK00714.1-4"/>
    <property type="match status" value="1"/>
</dbReference>
<dbReference type="NCBIfam" id="NF001938">
    <property type="entry name" value="PRK00714.1-5"/>
    <property type="match status" value="1"/>
</dbReference>
<dbReference type="PANTHER" id="PTHR23114">
    <property type="entry name" value="M7GPPPN-MRNA HYDROLASE"/>
    <property type="match status" value="1"/>
</dbReference>
<dbReference type="PANTHER" id="PTHR23114:SF17">
    <property type="entry name" value="M7GPPPN-MRNA HYDROLASE"/>
    <property type="match status" value="1"/>
</dbReference>
<dbReference type="Pfam" id="PF00293">
    <property type="entry name" value="NUDIX"/>
    <property type="match status" value="1"/>
</dbReference>
<dbReference type="PRINTS" id="PR00502">
    <property type="entry name" value="NUDIXFAMILY"/>
</dbReference>
<dbReference type="SUPFAM" id="SSF55811">
    <property type="entry name" value="Nudix"/>
    <property type="match status" value="1"/>
</dbReference>
<dbReference type="PROSITE" id="PS51462">
    <property type="entry name" value="NUDIX"/>
    <property type="match status" value="1"/>
</dbReference>
<dbReference type="PROSITE" id="PS00893">
    <property type="entry name" value="NUDIX_BOX"/>
    <property type="match status" value="1"/>
</dbReference>
<name>RPPH_SHESA</name>
<protein>
    <recommendedName>
        <fullName evidence="1">RNA pyrophosphohydrolase</fullName>
        <ecNumber evidence="1">3.6.1.-</ecNumber>
    </recommendedName>
    <alternativeName>
        <fullName evidence="1">(Di)nucleoside polyphosphate hydrolase</fullName>
    </alternativeName>
</protein>
<comment type="function">
    <text evidence="1">Accelerates the degradation of transcripts by removing pyrophosphate from the 5'-end of triphosphorylated RNA, leading to a more labile monophosphorylated state that can stimulate subsequent ribonuclease cleavage.</text>
</comment>
<comment type="cofactor">
    <cofactor evidence="1">
        <name>a divalent metal cation</name>
        <dbReference type="ChEBI" id="CHEBI:60240"/>
    </cofactor>
</comment>
<comment type="similarity">
    <text evidence="1">Belongs to the Nudix hydrolase family. RppH subfamily.</text>
</comment>
<feature type="chain" id="PRO_1000021999" description="RNA pyrophosphohydrolase">
    <location>
        <begin position="1"/>
        <end position="174"/>
    </location>
</feature>
<feature type="domain" description="Nudix hydrolase" evidence="1">
    <location>
        <begin position="6"/>
        <end position="149"/>
    </location>
</feature>
<feature type="short sequence motif" description="Nudix box">
    <location>
        <begin position="38"/>
        <end position="59"/>
    </location>
</feature>
<accession>A0KZP9</accession>
<reference key="1">
    <citation type="submission" date="2006-09" db="EMBL/GenBank/DDBJ databases">
        <title>Complete sequence of chromosome 1 of Shewanella sp. ANA-3.</title>
        <authorList>
            <person name="Copeland A."/>
            <person name="Lucas S."/>
            <person name="Lapidus A."/>
            <person name="Barry K."/>
            <person name="Detter J.C."/>
            <person name="Glavina del Rio T."/>
            <person name="Hammon N."/>
            <person name="Israni S."/>
            <person name="Dalin E."/>
            <person name="Tice H."/>
            <person name="Pitluck S."/>
            <person name="Chertkov O."/>
            <person name="Brettin T."/>
            <person name="Bruce D."/>
            <person name="Han C."/>
            <person name="Tapia R."/>
            <person name="Gilna P."/>
            <person name="Schmutz J."/>
            <person name="Larimer F."/>
            <person name="Land M."/>
            <person name="Hauser L."/>
            <person name="Kyrpides N."/>
            <person name="Kim E."/>
            <person name="Newman D."/>
            <person name="Salticov C."/>
            <person name="Konstantinidis K."/>
            <person name="Klappenback J."/>
            <person name="Tiedje J."/>
            <person name="Richardson P."/>
        </authorList>
    </citation>
    <scope>NUCLEOTIDE SEQUENCE [LARGE SCALE GENOMIC DNA]</scope>
    <source>
        <strain>ANA-3</strain>
    </source>
</reference>
<gene>
    <name evidence="1" type="primary">rppH</name>
    <name evidence="1" type="synonym">nudH</name>
    <name type="ordered locus">Shewana3_3043</name>
</gene>
<proteinExistence type="inferred from homology"/>
<sequence length="174" mass="20609">MIDSDGFRANVGIIICNRYGQVMWARRFGQHSWQFPQGGVDDGESAEEAMYRELYEEVGLRPEHVTILTSTRSWLRYRLPKRLVRQDSKPVCIGQKQKWFLLQLKSQDSAINLSSSGHPEFDDWRWVSYWYPVRQVVSFKRDVYRKVMKEFAVTALSFQTQEIPRKRVRQRTTG</sequence>
<evidence type="ECO:0000255" key="1">
    <source>
        <dbReference type="HAMAP-Rule" id="MF_00298"/>
    </source>
</evidence>
<organism>
    <name type="scientific">Shewanella sp. (strain ANA-3)</name>
    <dbReference type="NCBI Taxonomy" id="94122"/>
    <lineage>
        <taxon>Bacteria</taxon>
        <taxon>Pseudomonadati</taxon>
        <taxon>Pseudomonadota</taxon>
        <taxon>Gammaproteobacteria</taxon>
        <taxon>Alteromonadales</taxon>
        <taxon>Shewanellaceae</taxon>
        <taxon>Shewanella</taxon>
    </lineage>
</organism>
<keyword id="KW-0378">Hydrolase</keyword>